<feature type="chain" id="PRO_1000213482" description="K(+)/H(+) antiporter NhaP2">
    <location>
        <begin position="1"/>
        <end position="580"/>
    </location>
</feature>
<feature type="transmembrane region" description="Helical" evidence="1">
    <location>
        <begin position="6"/>
        <end position="26"/>
    </location>
</feature>
<feature type="transmembrane region" description="Helical" evidence="1">
    <location>
        <begin position="34"/>
        <end position="54"/>
    </location>
</feature>
<feature type="transmembrane region" description="Helical" evidence="1">
    <location>
        <begin position="57"/>
        <end position="77"/>
    </location>
</feature>
<feature type="transmembrane region" description="Helical" evidence="1">
    <location>
        <begin position="86"/>
        <end position="106"/>
    </location>
</feature>
<feature type="transmembrane region" description="Helical" evidence="1">
    <location>
        <begin position="108"/>
        <end position="128"/>
    </location>
</feature>
<feature type="transmembrane region" description="Helical" evidence="1">
    <location>
        <begin position="162"/>
        <end position="182"/>
    </location>
</feature>
<feature type="transmembrane region" description="Helical" evidence="1">
    <location>
        <begin position="193"/>
        <end position="213"/>
    </location>
</feature>
<feature type="transmembrane region" description="Helical" evidence="1">
    <location>
        <begin position="217"/>
        <end position="237"/>
    </location>
</feature>
<feature type="transmembrane region" description="Helical" evidence="1">
    <location>
        <begin position="240"/>
        <end position="260"/>
    </location>
</feature>
<feature type="transmembrane region" description="Helical" evidence="1">
    <location>
        <begin position="269"/>
        <end position="289"/>
    </location>
</feature>
<feature type="transmembrane region" description="Helical" evidence="1">
    <location>
        <begin position="292"/>
        <end position="312"/>
    </location>
</feature>
<feature type="transmembrane region" description="Helical" evidence="1">
    <location>
        <begin position="334"/>
        <end position="354"/>
    </location>
</feature>
<feature type="transmembrane region" description="Helical" evidence="1">
    <location>
        <begin position="366"/>
        <end position="386"/>
    </location>
</feature>
<feature type="domain" description="RCK C-terminal" evidence="1">
    <location>
        <begin position="402"/>
        <end position="484"/>
    </location>
</feature>
<comment type="function">
    <text evidence="1">K(+)/H(+) antiporter that extrudes potassium in exchange for external protons and maintains the internal concentration of potassium under toxic levels.</text>
</comment>
<comment type="catalytic activity">
    <reaction evidence="1">
        <text>K(+)(in) + H(+)(out) = K(+)(out) + H(+)(in)</text>
        <dbReference type="Rhea" id="RHEA:29467"/>
        <dbReference type="ChEBI" id="CHEBI:15378"/>
        <dbReference type="ChEBI" id="CHEBI:29103"/>
    </reaction>
    <physiologicalReaction direction="left-to-right" evidence="1">
        <dbReference type="Rhea" id="RHEA:29468"/>
    </physiologicalReaction>
</comment>
<comment type="subcellular location">
    <subcellularLocation>
        <location evidence="1">Cell inner membrane</location>
        <topology evidence="1">Multi-pass membrane protein</topology>
    </subcellularLocation>
</comment>
<comment type="similarity">
    <text evidence="1">Belongs to the monovalent cation:proton antiporter 1 (CPA1) transporter (TC 2.A.36) family. NhaP2 subfamily.</text>
</comment>
<organism>
    <name type="scientific">Pseudomonas fluorescens (strain SBW25)</name>
    <dbReference type="NCBI Taxonomy" id="216595"/>
    <lineage>
        <taxon>Bacteria</taxon>
        <taxon>Pseudomonadati</taxon>
        <taxon>Pseudomonadota</taxon>
        <taxon>Gammaproteobacteria</taxon>
        <taxon>Pseudomonadales</taxon>
        <taxon>Pseudomonadaceae</taxon>
        <taxon>Pseudomonas</taxon>
    </lineage>
</organism>
<keyword id="KW-0050">Antiport</keyword>
<keyword id="KW-0997">Cell inner membrane</keyword>
<keyword id="KW-1003">Cell membrane</keyword>
<keyword id="KW-0406">Ion transport</keyword>
<keyword id="KW-0472">Membrane</keyword>
<keyword id="KW-0630">Potassium</keyword>
<keyword id="KW-0633">Potassium transport</keyword>
<keyword id="KW-0812">Transmembrane</keyword>
<keyword id="KW-1133">Transmembrane helix</keyword>
<keyword id="KW-0813">Transport</keyword>
<sequence length="580" mass="61427">MNATTINSLFLIGALLVSASILVSSLSSRLGIPILVIILAVGMVAGVDGGGIIFDNYPTAYLVGNLALAVILLDGGLRTRVASFRVALWPALSLATVGVLITTGLTGMAAAWLFDLNIIQGLLIGAIVGSTDAAAVFSLLGGKGLNERVTASLEIESGSNDPMAVFLTVTLIDMLASGQTGLHWSLLTHLVREFGIGGVVGLGGGWLMLQMVNRINLATGLYPILVIAGGLFVFAVTNALHGSGFLAVYLCGLVIGNRPVRSRHGILHMLDGMAWLAQIGMFLVLGLLVTPHDLLPIALPALGLALWMILFARPLSVMVGLLPFKAFHGREKAFIAWVGLRGAVPIILAVFPLMAGLPHAQLYFNLAFFIVLVSLLVQGTSLPWVAKLLKVTVPPDPAPISRAALEVHVTSEWELFVYRLGAEKWCIGAALRELKMPEGTRIAALFRGQQLLHPSGSTVLEVGDLLCVIGHEHNLPALGKLFSQAPQRGLDLRFFGDFVLEGDAQLGAVSALYGLKLEGIDPDMPLSRFITQKVGGAPVVGDQVEWNNTIWTVAVMDGNKIGKVGVRFPEGSRPGPGLFL</sequence>
<name>NHAP2_PSEFS</name>
<reference key="1">
    <citation type="journal article" date="2009" name="Genome Biol.">
        <title>Genomic and genetic analyses of diversity and plant interactions of Pseudomonas fluorescens.</title>
        <authorList>
            <person name="Silby M.W."/>
            <person name="Cerdeno-Tarraga A.M."/>
            <person name="Vernikos G.S."/>
            <person name="Giddens S.R."/>
            <person name="Jackson R.W."/>
            <person name="Preston G.M."/>
            <person name="Zhang X.-X."/>
            <person name="Moon C.D."/>
            <person name="Gehrig S.M."/>
            <person name="Godfrey S.A.C."/>
            <person name="Knight C.G."/>
            <person name="Malone J.G."/>
            <person name="Robinson Z."/>
            <person name="Spiers A.J."/>
            <person name="Harris S."/>
            <person name="Challis G.L."/>
            <person name="Yaxley A.M."/>
            <person name="Harris D."/>
            <person name="Seeger K."/>
            <person name="Murphy L."/>
            <person name="Rutter S."/>
            <person name="Squares R."/>
            <person name="Quail M.A."/>
            <person name="Saunders E."/>
            <person name="Mavromatis K."/>
            <person name="Brettin T.S."/>
            <person name="Bentley S.D."/>
            <person name="Hothersall J."/>
            <person name="Stephens E."/>
            <person name="Thomas C.M."/>
            <person name="Parkhill J."/>
            <person name="Levy S.B."/>
            <person name="Rainey P.B."/>
            <person name="Thomson N.R."/>
        </authorList>
    </citation>
    <scope>NUCLEOTIDE SEQUENCE [LARGE SCALE GENOMIC DNA]</scope>
    <source>
        <strain>SBW25</strain>
    </source>
</reference>
<proteinExistence type="inferred from homology"/>
<dbReference type="EMBL" id="AM181176">
    <property type="protein sequence ID" value="CAY46722.1"/>
    <property type="molecule type" value="Genomic_DNA"/>
</dbReference>
<dbReference type="RefSeq" id="WP_012721847.1">
    <property type="nucleotide sequence ID" value="NC_012660.1"/>
</dbReference>
<dbReference type="SMR" id="C3KBV7"/>
<dbReference type="STRING" id="294.SRM1_00500"/>
<dbReference type="eggNOG" id="COG3263">
    <property type="taxonomic scope" value="Bacteria"/>
</dbReference>
<dbReference type="HOGENOM" id="CLU_005912_9_2_6"/>
<dbReference type="OrthoDB" id="9810759at2"/>
<dbReference type="GO" id="GO:0005886">
    <property type="term" value="C:plasma membrane"/>
    <property type="evidence" value="ECO:0007669"/>
    <property type="project" value="UniProtKB-SubCell"/>
</dbReference>
<dbReference type="GO" id="GO:0050660">
    <property type="term" value="F:flavin adenine dinucleotide binding"/>
    <property type="evidence" value="ECO:0007669"/>
    <property type="project" value="InterPro"/>
</dbReference>
<dbReference type="GO" id="GO:0015386">
    <property type="term" value="F:potassium:proton antiporter activity"/>
    <property type="evidence" value="ECO:0007669"/>
    <property type="project" value="UniProtKB-UniRule"/>
</dbReference>
<dbReference type="GO" id="GO:0006884">
    <property type="term" value="P:cell volume homeostasis"/>
    <property type="evidence" value="ECO:0007669"/>
    <property type="project" value="InterPro"/>
</dbReference>
<dbReference type="Gene3D" id="1.20.1530.20">
    <property type="match status" value="1"/>
</dbReference>
<dbReference type="Gene3D" id="3.30.465.10">
    <property type="match status" value="1"/>
</dbReference>
<dbReference type="Gene3D" id="3.30.70.1450">
    <property type="entry name" value="Regulator of K+ conductance, C-terminal domain"/>
    <property type="match status" value="1"/>
</dbReference>
<dbReference type="HAMAP" id="MF_01075">
    <property type="entry name" value="NhaP2"/>
    <property type="match status" value="1"/>
</dbReference>
<dbReference type="InterPro" id="IPR006153">
    <property type="entry name" value="Cation/H_exchanger_TM"/>
</dbReference>
<dbReference type="InterPro" id="IPR036318">
    <property type="entry name" value="FAD-bd_PCMH-like_sf"/>
</dbReference>
<dbReference type="InterPro" id="IPR016169">
    <property type="entry name" value="FAD-bd_PCMH_sub2"/>
</dbReference>
<dbReference type="InterPro" id="IPR038770">
    <property type="entry name" value="Na+/solute_symporter_sf"/>
</dbReference>
<dbReference type="InterPro" id="IPR023729">
    <property type="entry name" value="NhaP2"/>
</dbReference>
<dbReference type="InterPro" id="IPR006037">
    <property type="entry name" value="RCK_C"/>
</dbReference>
<dbReference type="InterPro" id="IPR036721">
    <property type="entry name" value="RCK_C_sf"/>
</dbReference>
<dbReference type="InterPro" id="IPR005170">
    <property type="entry name" value="Transptr-assoc_dom"/>
</dbReference>
<dbReference type="NCBIfam" id="NF003714">
    <property type="entry name" value="PRK05326.1-1"/>
    <property type="match status" value="1"/>
</dbReference>
<dbReference type="NCBIfam" id="NF003715">
    <property type="entry name" value="PRK05326.1-2"/>
    <property type="match status" value="1"/>
</dbReference>
<dbReference type="NCBIfam" id="NF003716">
    <property type="entry name" value="PRK05326.1-3"/>
    <property type="match status" value="1"/>
</dbReference>
<dbReference type="PANTHER" id="PTHR32507:SF7">
    <property type="entry name" value="K(+)_H(+) ANTIPORTER NHAP2"/>
    <property type="match status" value="1"/>
</dbReference>
<dbReference type="PANTHER" id="PTHR32507">
    <property type="entry name" value="NA(+)/H(+) ANTIPORTER 1"/>
    <property type="match status" value="1"/>
</dbReference>
<dbReference type="Pfam" id="PF03471">
    <property type="entry name" value="CorC_HlyC"/>
    <property type="match status" value="1"/>
</dbReference>
<dbReference type="Pfam" id="PF00999">
    <property type="entry name" value="Na_H_Exchanger"/>
    <property type="match status" value="1"/>
</dbReference>
<dbReference type="Pfam" id="PF02080">
    <property type="entry name" value="TrkA_C"/>
    <property type="match status" value="1"/>
</dbReference>
<dbReference type="SMART" id="SM01091">
    <property type="entry name" value="CorC_HlyC"/>
    <property type="match status" value="1"/>
</dbReference>
<dbReference type="SUPFAM" id="SSF56176">
    <property type="entry name" value="FAD-binding/transporter-associated domain-like"/>
    <property type="match status" value="1"/>
</dbReference>
<dbReference type="SUPFAM" id="SSF116726">
    <property type="entry name" value="TrkA C-terminal domain-like"/>
    <property type="match status" value="1"/>
</dbReference>
<dbReference type="PROSITE" id="PS51202">
    <property type="entry name" value="RCK_C"/>
    <property type="match status" value="1"/>
</dbReference>
<gene>
    <name evidence="1" type="primary">nhaP2</name>
    <name type="synonym">cvrA</name>
    <name type="ordered locus">PFLU_0446</name>
</gene>
<accession>C3KBV7</accession>
<evidence type="ECO:0000255" key="1">
    <source>
        <dbReference type="HAMAP-Rule" id="MF_01075"/>
    </source>
</evidence>
<protein>
    <recommendedName>
        <fullName evidence="1">K(+)/H(+) antiporter NhaP2</fullName>
    </recommendedName>
    <alternativeName>
        <fullName evidence="1">Potassium/proton antiporter NhaP2</fullName>
    </alternativeName>
</protein>